<reference key="1">
    <citation type="journal article" date="2015" name="Genome Announc.">
        <title>Complete genome sequence of Anaeromyxobacter sp. Fw109-5, an anaerobic, metal-reducing bacterium isolated from a contaminated subsurface environment.</title>
        <authorList>
            <person name="Hwang C."/>
            <person name="Copeland A."/>
            <person name="Lucas S."/>
            <person name="Lapidus A."/>
            <person name="Barry K."/>
            <person name="Glavina Del Rio T."/>
            <person name="Dalin E."/>
            <person name="Tice H."/>
            <person name="Pitluck S."/>
            <person name="Sims D."/>
            <person name="Brettin T."/>
            <person name="Bruce D.C."/>
            <person name="Detter J.C."/>
            <person name="Han C.S."/>
            <person name="Schmutz J."/>
            <person name="Larimer F.W."/>
            <person name="Land M.L."/>
            <person name="Hauser L.J."/>
            <person name="Kyrpides N."/>
            <person name="Lykidis A."/>
            <person name="Richardson P."/>
            <person name="Belieav A."/>
            <person name="Sanford R.A."/>
            <person name="Loeffler F.E."/>
            <person name="Fields M.W."/>
        </authorList>
    </citation>
    <scope>NUCLEOTIDE SEQUENCE [LARGE SCALE GENOMIC DNA]</scope>
    <source>
        <strain>Fw109-5</strain>
    </source>
</reference>
<feature type="chain" id="PRO_1000052985" description="Large ribosomal subunit protein uL18">
    <location>
        <begin position="1"/>
        <end position="119"/>
    </location>
</feature>
<keyword id="KW-1185">Reference proteome</keyword>
<keyword id="KW-0687">Ribonucleoprotein</keyword>
<keyword id="KW-0689">Ribosomal protein</keyword>
<keyword id="KW-0694">RNA-binding</keyword>
<keyword id="KW-0699">rRNA-binding</keyword>
<sequence>MAKHVTPREKRRARIRRKISGTAARPRLTIYKSLKHMYAQLVDDTTGTTIVSIATNAKALRDEVKDDDKTAAAKRVGEALAKAAMAKGIEAVVFDRNGFDYHGRVEAVAAAAREAGLKF</sequence>
<organism>
    <name type="scientific">Anaeromyxobacter sp. (strain Fw109-5)</name>
    <dbReference type="NCBI Taxonomy" id="404589"/>
    <lineage>
        <taxon>Bacteria</taxon>
        <taxon>Pseudomonadati</taxon>
        <taxon>Myxococcota</taxon>
        <taxon>Myxococcia</taxon>
        <taxon>Myxococcales</taxon>
        <taxon>Cystobacterineae</taxon>
        <taxon>Anaeromyxobacteraceae</taxon>
        <taxon>Anaeromyxobacter</taxon>
    </lineage>
</organism>
<comment type="function">
    <text evidence="1">This is one of the proteins that bind and probably mediate the attachment of the 5S RNA into the large ribosomal subunit, where it forms part of the central protuberance.</text>
</comment>
<comment type="subunit">
    <text evidence="1">Part of the 50S ribosomal subunit; part of the 5S rRNA/L5/L18/L25 subcomplex. Contacts the 5S and 23S rRNAs.</text>
</comment>
<comment type="similarity">
    <text evidence="1">Belongs to the universal ribosomal protein uL18 family.</text>
</comment>
<protein>
    <recommendedName>
        <fullName evidence="1">Large ribosomal subunit protein uL18</fullName>
    </recommendedName>
    <alternativeName>
        <fullName evidence="2">50S ribosomal protein L18</fullName>
    </alternativeName>
</protein>
<proteinExistence type="inferred from homology"/>
<name>RL18_ANADF</name>
<accession>A7HBN4</accession>
<evidence type="ECO:0000255" key="1">
    <source>
        <dbReference type="HAMAP-Rule" id="MF_01337"/>
    </source>
</evidence>
<evidence type="ECO:0000305" key="2"/>
<gene>
    <name evidence="1" type="primary">rplR</name>
    <name type="ordered locus">Anae109_1927</name>
</gene>
<dbReference type="EMBL" id="CP000769">
    <property type="protein sequence ID" value="ABS26130.1"/>
    <property type="molecule type" value="Genomic_DNA"/>
</dbReference>
<dbReference type="RefSeq" id="WP_012096709.1">
    <property type="nucleotide sequence ID" value="NC_009675.1"/>
</dbReference>
<dbReference type="SMR" id="A7HBN4"/>
<dbReference type="STRING" id="404589.Anae109_1927"/>
<dbReference type="KEGG" id="afw:Anae109_1927"/>
<dbReference type="eggNOG" id="COG0256">
    <property type="taxonomic scope" value="Bacteria"/>
</dbReference>
<dbReference type="HOGENOM" id="CLU_098841_0_1_7"/>
<dbReference type="OrthoDB" id="9810939at2"/>
<dbReference type="Proteomes" id="UP000006382">
    <property type="component" value="Chromosome"/>
</dbReference>
<dbReference type="GO" id="GO:0022625">
    <property type="term" value="C:cytosolic large ribosomal subunit"/>
    <property type="evidence" value="ECO:0007669"/>
    <property type="project" value="TreeGrafter"/>
</dbReference>
<dbReference type="GO" id="GO:0008097">
    <property type="term" value="F:5S rRNA binding"/>
    <property type="evidence" value="ECO:0007669"/>
    <property type="project" value="TreeGrafter"/>
</dbReference>
<dbReference type="GO" id="GO:0003735">
    <property type="term" value="F:structural constituent of ribosome"/>
    <property type="evidence" value="ECO:0007669"/>
    <property type="project" value="InterPro"/>
</dbReference>
<dbReference type="GO" id="GO:0006412">
    <property type="term" value="P:translation"/>
    <property type="evidence" value="ECO:0007669"/>
    <property type="project" value="UniProtKB-UniRule"/>
</dbReference>
<dbReference type="CDD" id="cd00432">
    <property type="entry name" value="Ribosomal_L18_L5e"/>
    <property type="match status" value="1"/>
</dbReference>
<dbReference type="FunFam" id="3.30.420.100:FF:000001">
    <property type="entry name" value="50S ribosomal protein L18"/>
    <property type="match status" value="1"/>
</dbReference>
<dbReference type="Gene3D" id="3.30.420.100">
    <property type="match status" value="1"/>
</dbReference>
<dbReference type="HAMAP" id="MF_01337_B">
    <property type="entry name" value="Ribosomal_uL18_B"/>
    <property type="match status" value="1"/>
</dbReference>
<dbReference type="InterPro" id="IPR004389">
    <property type="entry name" value="Ribosomal_uL18_bac-type"/>
</dbReference>
<dbReference type="InterPro" id="IPR005484">
    <property type="entry name" value="Ribosomal_uL18_bac/euk"/>
</dbReference>
<dbReference type="NCBIfam" id="TIGR00060">
    <property type="entry name" value="L18_bact"/>
    <property type="match status" value="1"/>
</dbReference>
<dbReference type="PANTHER" id="PTHR12899">
    <property type="entry name" value="39S RIBOSOMAL PROTEIN L18, MITOCHONDRIAL"/>
    <property type="match status" value="1"/>
</dbReference>
<dbReference type="PANTHER" id="PTHR12899:SF3">
    <property type="entry name" value="LARGE RIBOSOMAL SUBUNIT PROTEIN UL18M"/>
    <property type="match status" value="1"/>
</dbReference>
<dbReference type="Pfam" id="PF00861">
    <property type="entry name" value="Ribosomal_L18p"/>
    <property type="match status" value="1"/>
</dbReference>
<dbReference type="SUPFAM" id="SSF53137">
    <property type="entry name" value="Translational machinery components"/>
    <property type="match status" value="1"/>
</dbReference>